<comment type="function">
    <text evidence="1">Cytochrome P450 that catalyzes an intramolecular para-para' C-C phenol coupling of 4'-O-methylnorbelladine in alkaloids biosynthesis, including haemanthamine- and crinamine-type alkaloids, promising anticancer agents. Catalyzes the formation of (10bR,4aS)-noroxomaritidine and (10bS,4aR)-noroxomaritidine from 4'-O-methylnorbelladine.</text>
</comment>
<comment type="catalytic activity">
    <reaction evidence="1">
        <text>4'-O-methylnorbelladine + reduced [NADPH--hemoprotein reductase] + O2 = (10bR,4aS)-noroxomaritidine + oxidized [NADPH--hemoprotein reductase] + 2 H2O + H(+)</text>
        <dbReference type="Rhea" id="RHEA:51260"/>
        <dbReference type="Rhea" id="RHEA-COMP:11964"/>
        <dbReference type="Rhea" id="RHEA-COMP:11965"/>
        <dbReference type="ChEBI" id="CHEBI:15377"/>
        <dbReference type="ChEBI" id="CHEBI:15378"/>
        <dbReference type="ChEBI" id="CHEBI:15379"/>
        <dbReference type="ChEBI" id="CHEBI:57618"/>
        <dbReference type="ChEBI" id="CHEBI:58210"/>
        <dbReference type="ChEBI" id="CHEBI:133993"/>
        <dbReference type="ChEBI" id="CHEBI:133995"/>
        <dbReference type="EC" id="1.14.19.50"/>
    </reaction>
</comment>
<comment type="catalytic activity">
    <reaction evidence="1">
        <text>4'-O-methylnorbelladine + reduced [NADPH--hemoprotein reductase] + O2 = (10bS,4aR)-noroxomaritidine + oxidized [NADPH--hemoprotein reductase] + 2 H2O + H(+)</text>
        <dbReference type="Rhea" id="RHEA:51264"/>
        <dbReference type="Rhea" id="RHEA-COMP:11964"/>
        <dbReference type="Rhea" id="RHEA-COMP:11965"/>
        <dbReference type="ChEBI" id="CHEBI:15377"/>
        <dbReference type="ChEBI" id="CHEBI:15378"/>
        <dbReference type="ChEBI" id="CHEBI:15379"/>
        <dbReference type="ChEBI" id="CHEBI:57618"/>
        <dbReference type="ChEBI" id="CHEBI:58210"/>
        <dbReference type="ChEBI" id="CHEBI:133993"/>
        <dbReference type="ChEBI" id="CHEBI:133996"/>
        <dbReference type="EC" id="1.14.19.50"/>
    </reaction>
</comment>
<comment type="cofactor">
    <cofactor evidence="2">
        <name>heme</name>
        <dbReference type="ChEBI" id="CHEBI:30413"/>
    </cofactor>
</comment>
<comment type="pathway">
    <text evidence="1">Alkaloid biosynthesis.</text>
</comment>
<comment type="subcellular location">
    <subcellularLocation>
        <location evidence="3">Membrane</location>
        <topology evidence="3">Single-pass membrane protein</topology>
    </subcellularLocation>
</comment>
<comment type="tissue specificity">
    <text evidence="4">Mostly expressed in stems, and, to a lower extent, in bulbs, roots, leaves and flowers.</text>
</comment>
<comment type="similarity">
    <text evidence="6">Belongs to the cytochrome P450 family.</text>
</comment>
<evidence type="ECO:0000250" key="1">
    <source>
        <dbReference type="UniProtKB" id="A0A140IL90"/>
    </source>
</evidence>
<evidence type="ECO:0000250" key="2">
    <source>
        <dbReference type="UniProtKB" id="Q96242"/>
    </source>
</evidence>
<evidence type="ECO:0000255" key="3"/>
<evidence type="ECO:0000269" key="4">
    <source>
    </source>
</evidence>
<evidence type="ECO:0000303" key="5">
    <source>
    </source>
</evidence>
<evidence type="ECO:0000305" key="6"/>
<proteinExistence type="evidence at transcript level"/>
<dbReference type="EC" id="1.14.19.50" evidence="1"/>
<dbReference type="EMBL" id="MF416097">
    <property type="protein sequence ID" value="AUG71942.1"/>
    <property type="molecule type" value="mRNA"/>
</dbReference>
<dbReference type="SMR" id="A0A2H5AJ00"/>
<dbReference type="GO" id="GO:0016020">
    <property type="term" value="C:membrane"/>
    <property type="evidence" value="ECO:0007669"/>
    <property type="project" value="UniProtKB-SubCell"/>
</dbReference>
<dbReference type="GO" id="GO:0020037">
    <property type="term" value="F:heme binding"/>
    <property type="evidence" value="ECO:0007669"/>
    <property type="project" value="InterPro"/>
</dbReference>
<dbReference type="GO" id="GO:0005506">
    <property type="term" value="F:iron ion binding"/>
    <property type="evidence" value="ECO:0007669"/>
    <property type="project" value="InterPro"/>
</dbReference>
<dbReference type="GO" id="GO:0004497">
    <property type="term" value="F:monooxygenase activity"/>
    <property type="evidence" value="ECO:0007669"/>
    <property type="project" value="UniProtKB-KW"/>
</dbReference>
<dbReference type="GO" id="GO:0016705">
    <property type="term" value="F:oxidoreductase activity, acting on paired donors, with incorporation or reduction of molecular oxygen"/>
    <property type="evidence" value="ECO:0007669"/>
    <property type="project" value="InterPro"/>
</dbReference>
<dbReference type="GO" id="GO:0009820">
    <property type="term" value="P:alkaloid metabolic process"/>
    <property type="evidence" value="ECO:0007669"/>
    <property type="project" value="UniProtKB-KW"/>
</dbReference>
<dbReference type="GO" id="GO:0006629">
    <property type="term" value="P:lipid metabolic process"/>
    <property type="evidence" value="ECO:0007669"/>
    <property type="project" value="UniProtKB-ARBA"/>
</dbReference>
<dbReference type="CDD" id="cd11064">
    <property type="entry name" value="CYP86A"/>
    <property type="match status" value="1"/>
</dbReference>
<dbReference type="Gene3D" id="1.10.630.10">
    <property type="entry name" value="Cytochrome P450"/>
    <property type="match status" value="1"/>
</dbReference>
<dbReference type="InterPro" id="IPR001128">
    <property type="entry name" value="Cyt_P450"/>
</dbReference>
<dbReference type="InterPro" id="IPR017972">
    <property type="entry name" value="Cyt_P450_CS"/>
</dbReference>
<dbReference type="InterPro" id="IPR002401">
    <property type="entry name" value="Cyt_P450_E_grp-I"/>
</dbReference>
<dbReference type="InterPro" id="IPR036396">
    <property type="entry name" value="Cyt_P450_sf"/>
</dbReference>
<dbReference type="PANTHER" id="PTHR24296">
    <property type="entry name" value="CYTOCHROME P450"/>
    <property type="match status" value="1"/>
</dbReference>
<dbReference type="Pfam" id="PF00067">
    <property type="entry name" value="p450"/>
    <property type="match status" value="1"/>
</dbReference>
<dbReference type="PRINTS" id="PR00463">
    <property type="entry name" value="EP450I"/>
</dbReference>
<dbReference type="PRINTS" id="PR00385">
    <property type="entry name" value="P450"/>
</dbReference>
<dbReference type="SUPFAM" id="SSF48264">
    <property type="entry name" value="Cytochrome P450"/>
    <property type="match status" value="1"/>
</dbReference>
<dbReference type="PROSITE" id="PS00086">
    <property type="entry name" value="CYTOCHROME_P450"/>
    <property type="match status" value="1"/>
</dbReference>
<name>C96T1_NARPS</name>
<gene>
    <name evidence="5" type="primary">Cyp96T1</name>
</gene>
<protein>
    <recommendedName>
        <fullName evidence="5">Noroxomaritidine synthase 1</fullName>
        <ecNumber evidence="1">1.14.19.50</ecNumber>
    </recommendedName>
    <alternativeName>
        <fullName evidence="5">CYP96T1</fullName>
    </alternativeName>
    <alternativeName>
        <fullName evidence="5">Cytochrome P450 96T1</fullName>
    </alternativeName>
</protein>
<keyword id="KW-0017">Alkaloid metabolism</keyword>
<keyword id="KW-0349">Heme</keyword>
<keyword id="KW-0408">Iron</keyword>
<keyword id="KW-0472">Membrane</keyword>
<keyword id="KW-0479">Metal-binding</keyword>
<keyword id="KW-0503">Monooxygenase</keyword>
<keyword id="KW-0560">Oxidoreductase</keyword>
<keyword id="KW-0812">Transmembrane</keyword>
<keyword id="KW-1133">Transmembrane helix</keyword>
<sequence length="513" mass="58894">MATSSSAWLIFSDHYREILIAIACLVVFSLLRSARSSSKGGLPYNWPIFGMLPAIISNNQFNDFTTARLRKMGWTFIFKGPWLLDMDYIFTCDPSNINHMFNDNFENYPKGELGKVFDIFGNNIFNADGDLWHDHRKMAQTILWDGNYRTMQATFIRNKMDNALIPILDSAACKRNPVDLQDVLLRFTFDTSCFSVLAADPESLTMEFPPVPFSKAADQALDAALTRHITPRLIWKLKRFFNVGSERTLAVAWKVIDSYIYDKIAELKAKRKLVGKINSYDAVSFYMDNFNIHDDKFLRDNAFTYLLAQRNTQSLTMTWLFYALFENPKVELKILSELKSIVDESSERKFNDGFALFDSNMIQSAIYLHATLCEALRIYPPVPFEIKDAHKADVLPSGHKVRAGEKILFSPYAMARMKGIWGDDCLEFKPERWITGNGTLKHEPAYKFFAFSAGPRICLGKELSFTQMKMVVATIIYNFHLQMVKGHVVEQSNSILMDMKHGLMVQVRKRSVM</sequence>
<accession>A0A2H5AJ00</accession>
<reference key="1">
    <citation type="journal article" date="2017" name="Sci. Rep.">
        <title>Transcriptome and metabolome profiling of Narcissus pseudonarcissus 'King Alfred' reveal components of Amaryllidaceae alkaloid metabolism.</title>
        <authorList>
            <person name="Singh A."/>
            <person name="Desgagne-Penix I."/>
        </authorList>
    </citation>
    <scope>NUCLEOTIDE SEQUENCE [MRNA]</scope>
    <scope>REVIEW ON THE AMARYLLIDACEAE ALKALOID METABOLISM</scope>
    <scope>PATHWAY</scope>
    <scope>TISSUE SPECIFICITY</scope>
    <scope>GENE FAMILY</scope>
    <scope>NOMENCLATURE</scope>
    <source>
        <strain>cv. King Alfred</strain>
        <tissue>Bulb</tissue>
    </source>
</reference>
<feature type="chain" id="PRO_0000450646" description="Noroxomaritidine synthase 1">
    <location>
        <begin position="1"/>
        <end position="513"/>
    </location>
</feature>
<feature type="transmembrane region" description="Helical" evidence="3">
    <location>
        <begin position="18"/>
        <end position="34"/>
    </location>
</feature>
<feature type="binding site" description="axial binding residue" evidence="2">
    <location>
        <position position="458"/>
    </location>
    <ligand>
        <name>heme</name>
        <dbReference type="ChEBI" id="CHEBI:30413"/>
    </ligand>
    <ligandPart>
        <name>Fe</name>
        <dbReference type="ChEBI" id="CHEBI:18248"/>
    </ligandPart>
</feature>
<organism>
    <name type="scientific">Narcissus pseudonarcissus</name>
    <name type="common">Daffodil</name>
    <dbReference type="NCBI Taxonomy" id="39639"/>
    <lineage>
        <taxon>Eukaryota</taxon>
        <taxon>Viridiplantae</taxon>
        <taxon>Streptophyta</taxon>
        <taxon>Embryophyta</taxon>
        <taxon>Tracheophyta</taxon>
        <taxon>Spermatophyta</taxon>
        <taxon>Magnoliopsida</taxon>
        <taxon>Liliopsida</taxon>
        <taxon>Asparagales</taxon>
        <taxon>Amaryllidaceae</taxon>
        <taxon>Amaryllidoideae</taxon>
        <taxon>Narcissus</taxon>
    </lineage>
</organism>